<dbReference type="EMBL" id="Z70177">
    <property type="protein sequence ID" value="CAA94040.1"/>
    <property type="molecule type" value="Genomic_DNA"/>
</dbReference>
<dbReference type="EMBL" id="AL009126">
    <property type="protein sequence ID" value="CAB13129.1"/>
    <property type="molecule type" value="Genomic_DNA"/>
</dbReference>
<dbReference type="PIR" id="B69733">
    <property type="entry name" value="B69733"/>
</dbReference>
<dbReference type="RefSeq" id="NP_389154.1">
    <property type="nucleotide sequence ID" value="NC_000964.3"/>
</dbReference>
<dbReference type="RefSeq" id="WP_003232671.1">
    <property type="nucleotide sequence ID" value="NZ_OZ025638.1"/>
</dbReference>
<dbReference type="SMR" id="P54338"/>
<dbReference type="FunCoup" id="P54338">
    <property type="interactions" value="76"/>
</dbReference>
<dbReference type="STRING" id="224308.BSU12720"/>
<dbReference type="PaxDb" id="224308-BSU12720"/>
<dbReference type="EnsemblBacteria" id="CAB13129">
    <property type="protein sequence ID" value="CAB13129"/>
    <property type="gene ID" value="BSU_12720"/>
</dbReference>
<dbReference type="GeneID" id="939840"/>
<dbReference type="KEGG" id="bsu:BSU12720"/>
<dbReference type="PATRIC" id="fig|224308.179.peg.1379"/>
<dbReference type="eggNOG" id="COG3628">
    <property type="taxonomic scope" value="Bacteria"/>
</dbReference>
<dbReference type="InParanoid" id="P54338"/>
<dbReference type="OrthoDB" id="89089at2"/>
<dbReference type="PhylomeDB" id="P54338"/>
<dbReference type="BioCyc" id="BSUB:BSU12720-MONOMER"/>
<dbReference type="Proteomes" id="UP000001570">
    <property type="component" value="Chromosome"/>
</dbReference>
<dbReference type="InterPro" id="IPR020288">
    <property type="entry name" value="DUF2634"/>
</dbReference>
<dbReference type="Pfam" id="PF10934">
    <property type="entry name" value="DUF2634"/>
    <property type="match status" value="1"/>
</dbReference>
<sequence length="141" mass="16205">MALTPEVEFEDIEVESEVIETSQTYKIDFENGRITNELITGLEAIRQFVYIALQTERYAYSIYSHNVGNELQDVLTDHETTDAYKKMEIPRLIEEALVYDDRISAVTDFEIEKQGDAFHVSFVVETDEGTLEIEEVIGEDV</sequence>
<name>XKDS_BACSU</name>
<reference key="1">
    <citation type="submission" date="1996-03" db="EMBL/GenBank/DDBJ databases">
        <authorList>
            <person name="Krogh S."/>
            <person name="O'Reilly M."/>
            <person name="Nolan N."/>
            <person name="Devine K.M."/>
        </authorList>
    </citation>
    <scope>NUCLEOTIDE SEQUENCE [GENOMIC DNA]</scope>
    <source>
        <strain>168</strain>
    </source>
</reference>
<reference key="2">
    <citation type="journal article" date="1997" name="Nature">
        <title>The complete genome sequence of the Gram-positive bacterium Bacillus subtilis.</title>
        <authorList>
            <person name="Kunst F."/>
            <person name="Ogasawara N."/>
            <person name="Moszer I."/>
            <person name="Albertini A.M."/>
            <person name="Alloni G."/>
            <person name="Azevedo V."/>
            <person name="Bertero M.G."/>
            <person name="Bessieres P."/>
            <person name="Bolotin A."/>
            <person name="Borchert S."/>
            <person name="Borriss R."/>
            <person name="Boursier L."/>
            <person name="Brans A."/>
            <person name="Braun M."/>
            <person name="Brignell S.C."/>
            <person name="Bron S."/>
            <person name="Brouillet S."/>
            <person name="Bruschi C.V."/>
            <person name="Caldwell B."/>
            <person name="Capuano V."/>
            <person name="Carter N.M."/>
            <person name="Choi S.-K."/>
            <person name="Codani J.-J."/>
            <person name="Connerton I.F."/>
            <person name="Cummings N.J."/>
            <person name="Daniel R.A."/>
            <person name="Denizot F."/>
            <person name="Devine K.M."/>
            <person name="Duesterhoeft A."/>
            <person name="Ehrlich S.D."/>
            <person name="Emmerson P.T."/>
            <person name="Entian K.-D."/>
            <person name="Errington J."/>
            <person name="Fabret C."/>
            <person name="Ferrari E."/>
            <person name="Foulger D."/>
            <person name="Fritz C."/>
            <person name="Fujita M."/>
            <person name="Fujita Y."/>
            <person name="Fuma S."/>
            <person name="Galizzi A."/>
            <person name="Galleron N."/>
            <person name="Ghim S.-Y."/>
            <person name="Glaser P."/>
            <person name="Goffeau A."/>
            <person name="Golightly E.J."/>
            <person name="Grandi G."/>
            <person name="Guiseppi G."/>
            <person name="Guy B.J."/>
            <person name="Haga K."/>
            <person name="Haiech J."/>
            <person name="Harwood C.R."/>
            <person name="Henaut A."/>
            <person name="Hilbert H."/>
            <person name="Holsappel S."/>
            <person name="Hosono S."/>
            <person name="Hullo M.-F."/>
            <person name="Itaya M."/>
            <person name="Jones L.-M."/>
            <person name="Joris B."/>
            <person name="Karamata D."/>
            <person name="Kasahara Y."/>
            <person name="Klaerr-Blanchard M."/>
            <person name="Klein C."/>
            <person name="Kobayashi Y."/>
            <person name="Koetter P."/>
            <person name="Koningstein G."/>
            <person name="Krogh S."/>
            <person name="Kumano M."/>
            <person name="Kurita K."/>
            <person name="Lapidus A."/>
            <person name="Lardinois S."/>
            <person name="Lauber J."/>
            <person name="Lazarevic V."/>
            <person name="Lee S.-M."/>
            <person name="Levine A."/>
            <person name="Liu H."/>
            <person name="Masuda S."/>
            <person name="Mauel C."/>
            <person name="Medigue C."/>
            <person name="Medina N."/>
            <person name="Mellado R.P."/>
            <person name="Mizuno M."/>
            <person name="Moestl D."/>
            <person name="Nakai S."/>
            <person name="Noback M."/>
            <person name="Noone D."/>
            <person name="O'Reilly M."/>
            <person name="Ogawa K."/>
            <person name="Ogiwara A."/>
            <person name="Oudega B."/>
            <person name="Park S.-H."/>
            <person name="Parro V."/>
            <person name="Pohl T.M."/>
            <person name="Portetelle D."/>
            <person name="Porwollik S."/>
            <person name="Prescott A.M."/>
            <person name="Presecan E."/>
            <person name="Pujic P."/>
            <person name="Purnelle B."/>
            <person name="Rapoport G."/>
            <person name="Rey M."/>
            <person name="Reynolds S."/>
            <person name="Rieger M."/>
            <person name="Rivolta C."/>
            <person name="Rocha E."/>
            <person name="Roche B."/>
            <person name="Rose M."/>
            <person name="Sadaie Y."/>
            <person name="Sato T."/>
            <person name="Scanlan E."/>
            <person name="Schleich S."/>
            <person name="Schroeter R."/>
            <person name="Scoffone F."/>
            <person name="Sekiguchi J."/>
            <person name="Sekowska A."/>
            <person name="Seror S.J."/>
            <person name="Serror P."/>
            <person name="Shin B.-S."/>
            <person name="Soldo B."/>
            <person name="Sorokin A."/>
            <person name="Tacconi E."/>
            <person name="Takagi T."/>
            <person name="Takahashi H."/>
            <person name="Takemaru K."/>
            <person name="Takeuchi M."/>
            <person name="Tamakoshi A."/>
            <person name="Tanaka T."/>
            <person name="Terpstra P."/>
            <person name="Tognoni A."/>
            <person name="Tosato V."/>
            <person name="Uchiyama S."/>
            <person name="Vandenbol M."/>
            <person name="Vannier F."/>
            <person name="Vassarotti A."/>
            <person name="Viari A."/>
            <person name="Wambutt R."/>
            <person name="Wedler E."/>
            <person name="Wedler H."/>
            <person name="Weitzenegger T."/>
            <person name="Winters P."/>
            <person name="Wipat A."/>
            <person name="Yamamoto H."/>
            <person name="Yamane K."/>
            <person name="Yasumoto K."/>
            <person name="Yata K."/>
            <person name="Yoshida K."/>
            <person name="Yoshikawa H.-F."/>
            <person name="Zumstein E."/>
            <person name="Yoshikawa H."/>
            <person name="Danchin A."/>
        </authorList>
    </citation>
    <scope>NUCLEOTIDE SEQUENCE [LARGE SCALE GENOMIC DNA]</scope>
    <source>
        <strain>168</strain>
    </source>
</reference>
<proteinExistence type="predicted"/>
<keyword id="KW-1185">Reference proteome</keyword>
<accession>P54338</accession>
<evidence type="ECO:0000305" key="1"/>
<gene>
    <name type="primary">xkdS</name>
    <name type="ordered locus">BSU12720</name>
</gene>
<feature type="chain" id="PRO_0000066032" description="Phage-like element PBSX protein XkdS">
    <location>
        <begin position="1"/>
        <end position="141"/>
    </location>
</feature>
<organism>
    <name type="scientific">Bacillus subtilis (strain 168)</name>
    <dbReference type="NCBI Taxonomy" id="224308"/>
    <lineage>
        <taxon>Bacteria</taxon>
        <taxon>Bacillati</taxon>
        <taxon>Bacillota</taxon>
        <taxon>Bacilli</taxon>
        <taxon>Bacillales</taxon>
        <taxon>Bacillaceae</taxon>
        <taxon>Bacillus</taxon>
    </lineage>
</organism>
<protein>
    <recommendedName>
        <fullName>Phage-like element PBSX protein XkdS</fullName>
    </recommendedName>
</protein>
<comment type="similarity">
    <text evidence="1">To B.subtilis YqbS.</text>
</comment>